<proteinExistence type="inferred from homology"/>
<organism>
    <name type="scientific">Canis lupus familiaris</name>
    <name type="common">Dog</name>
    <name type="synonym">Canis familiaris</name>
    <dbReference type="NCBI Taxonomy" id="9615"/>
    <lineage>
        <taxon>Eukaryota</taxon>
        <taxon>Metazoa</taxon>
        <taxon>Chordata</taxon>
        <taxon>Craniata</taxon>
        <taxon>Vertebrata</taxon>
        <taxon>Euteleostomi</taxon>
        <taxon>Mammalia</taxon>
        <taxon>Eutheria</taxon>
        <taxon>Laurasiatheria</taxon>
        <taxon>Carnivora</taxon>
        <taxon>Caniformia</taxon>
        <taxon>Canidae</taxon>
        <taxon>Canis</taxon>
    </lineage>
</organism>
<evidence type="ECO:0000250" key="1"/>
<evidence type="ECO:0000250" key="2">
    <source>
        <dbReference type="UniProtKB" id="P46629"/>
    </source>
</evidence>
<evidence type="ECO:0000250" key="3">
    <source>
        <dbReference type="UniProtKB" id="P57735"/>
    </source>
</evidence>
<evidence type="ECO:0000250" key="4">
    <source>
        <dbReference type="UniProtKB" id="P61106"/>
    </source>
</evidence>
<evidence type="ECO:0000250" key="5">
    <source>
        <dbReference type="UniProtKB" id="P62820"/>
    </source>
</evidence>
<evidence type="ECO:0000250" key="6">
    <source>
        <dbReference type="UniProtKB" id="Q9WTL2"/>
    </source>
</evidence>
<evidence type="ECO:0000255" key="7"/>
<evidence type="ECO:0000269" key="8">
    <source>
    </source>
</evidence>
<evidence type="ECO:0000305" key="9"/>
<keyword id="KW-1003">Cell membrane</keyword>
<keyword id="KW-0966">Cell projection</keyword>
<keyword id="KW-0968">Cytoplasmic vesicle</keyword>
<keyword id="KW-0342">GTP-binding</keyword>
<keyword id="KW-0378">Hydrolase</keyword>
<keyword id="KW-0449">Lipoprotein</keyword>
<keyword id="KW-0460">Magnesium</keyword>
<keyword id="KW-0472">Membrane</keyword>
<keyword id="KW-0479">Metal-binding</keyword>
<keyword id="KW-0488">Methylation</keyword>
<keyword id="KW-0547">Nucleotide-binding</keyword>
<keyword id="KW-0636">Prenylation</keyword>
<keyword id="KW-0653">Protein transport</keyword>
<keyword id="KW-1185">Reference proteome</keyword>
<keyword id="KW-0813">Transport</keyword>
<name>RAB25_CANLF</name>
<comment type="function">
    <text evidence="2 3 4 6 8">The small GTPases Rab are key regulators of intracellular membrane trafficking, from the formation of transport vesicles to their fusion with membranes. Rabs cycle between an inactive GDP-bound form and an active GTP-bound form that is able to recruit to membranes different set of downstream effectors directly responsible for vesicle formation, movement, tethering and fusion (By similarity). RAB25 regulates epithelial cell differentiation, proliferation and survival, thereby playing key roles in tumorigenesis. Promotes invasive migration of cells in which it functions to localize and maintain integrin alpha-V/beta-1 at the tips of extending pseudopodia (By similarity). Involved in the regulation of epithelial morphogenesis through the control of CLDN4 expression and localization at tight junctions (By similarity). May selectively regulate the apical recycling pathway (By similarity). Together with MYO5B regulates transcytosis (PubMed:19451275).</text>
</comment>
<comment type="catalytic activity">
    <reaction evidence="2">
        <text>GTP + H2O = GDP + phosphate + H(+)</text>
        <dbReference type="Rhea" id="RHEA:19669"/>
        <dbReference type="ChEBI" id="CHEBI:15377"/>
        <dbReference type="ChEBI" id="CHEBI:15378"/>
        <dbReference type="ChEBI" id="CHEBI:37565"/>
        <dbReference type="ChEBI" id="CHEBI:43474"/>
        <dbReference type="ChEBI" id="CHEBI:58189"/>
        <dbReference type="EC" id="3.6.5.2"/>
    </reaction>
    <physiologicalReaction direction="left-to-right" evidence="2">
        <dbReference type="Rhea" id="RHEA:19670"/>
    </physiologicalReaction>
</comment>
<comment type="cofactor">
    <cofactor evidence="3">
        <name>Mg(2+)</name>
        <dbReference type="ChEBI" id="CHEBI:18420"/>
    </cofactor>
</comment>
<comment type="activity regulation">
    <text evidence="3">Regulated by guanine nucleotide exchange factors (GEFs) which promote the exchange of bound GDP for free GTP. Regulated by GTPase activating proteins (GAPs) which increase the GTP hydrolysis activity. Inhibited by GDP dissociation inhibitors (GDIs) which prevent Rab-GDP dissociation.</text>
</comment>
<comment type="subunit">
    <text evidence="3">Interacts (GTP-bound form) with RAB11FIP1, RAB11FIP2, RAB11FIP3 and RAB11FIP4. Interacts (via the hypervariable C-terminal region) with ITGB1 (via the cytoplasmic region); the interaction is GTP-dependent. Interacts with ITGAV. Associates with the integrin alpha-V/beta-1 heterodimer. Interacts with VPS33B.</text>
</comment>
<comment type="subcellular location">
    <subcellularLocation>
        <location evidence="9">Cell membrane</location>
        <topology evidence="9">Lipid-anchor</topology>
        <orientation evidence="9">Cytoplasmic side</orientation>
    </subcellularLocation>
    <subcellularLocation>
        <location evidence="3">Cell projection</location>
        <location evidence="3">Pseudopodium membrane</location>
    </subcellularLocation>
    <subcellularLocation>
        <location evidence="3">Cytoplasmic vesicle</location>
    </subcellularLocation>
    <text evidence="3">Colocalizes with integrin alpha-V/beta-1 in vesicles at the pseudopodial tips.</text>
</comment>
<comment type="domain">
    <text evidence="5">Switch 1, switch 2 and the interswitch regions are characteristic of Rab GTPases and mediate the interactions with Rab downstream effectors. The switch regions undergo conformational changes upon nucleotide binding which drive interaction with specific sets of effector proteins, with most effectors only binding to GTP-bound Rab.</text>
</comment>
<comment type="similarity">
    <text evidence="9">Belongs to the small GTPase superfamily. Rab family.</text>
</comment>
<sequence>MGNRTEEDYNFVFKVVLIGESGVGKTNLLSRFTRNEFSHDSRTTIGVEFSTRTVMLGTAAIKAQIWDTAGLERYRAITSAYYRGAVGALLVFDLTKHQTYAVVERWLKELYDHAEATIVVMLVGNKSDLHQAREVPTEEARMFAENNGLLFLETSALDSTNVELAFETVLKEIFTKVSKQRQNSTRTNAIALGSAQAGQEPGAGQKRACCISL</sequence>
<gene>
    <name type="primary">RAB25</name>
</gene>
<dbReference type="EC" id="3.6.5.2" evidence="2"/>
<dbReference type="RefSeq" id="NP_001300794.1">
    <property type="nucleotide sequence ID" value="NM_001313865.1"/>
</dbReference>
<dbReference type="SMR" id="E2RQ15"/>
<dbReference type="FunCoup" id="E2RQ15">
    <property type="interactions" value="52"/>
</dbReference>
<dbReference type="STRING" id="9615.ENSCAFP00000024805"/>
<dbReference type="PaxDb" id="9612-ENSCAFP00000024805"/>
<dbReference type="Ensembl" id="ENSCAFT00000026699.5">
    <property type="protein sequence ID" value="ENSCAFP00000024805.3"/>
    <property type="gene ID" value="ENSCAFG00000016866.5"/>
</dbReference>
<dbReference type="Ensembl" id="ENSCAFT00030000715.1">
    <property type="protein sequence ID" value="ENSCAFP00030000619.1"/>
    <property type="gene ID" value="ENSCAFG00030000419.1"/>
</dbReference>
<dbReference type="Ensembl" id="ENSCAFT00040039278.1">
    <property type="protein sequence ID" value="ENSCAFP00040034265.1"/>
    <property type="gene ID" value="ENSCAFG00040021172.1"/>
</dbReference>
<dbReference type="GeneID" id="490418"/>
<dbReference type="KEGG" id="cfa:490418"/>
<dbReference type="CTD" id="57111"/>
<dbReference type="VGNC" id="VGNC:45265">
    <property type="gene designation" value="RAB25"/>
</dbReference>
<dbReference type="eggNOG" id="KOG0087">
    <property type="taxonomic scope" value="Eukaryota"/>
</dbReference>
<dbReference type="HOGENOM" id="CLU_041217_23_1_1"/>
<dbReference type="InParanoid" id="E2RQ15"/>
<dbReference type="OMA" id="KRACCIN"/>
<dbReference type="OrthoDB" id="9989112at2759"/>
<dbReference type="TreeFam" id="TF300099"/>
<dbReference type="Reactome" id="R-CFA-8873719">
    <property type="pathway name" value="RAB geranylgeranylation"/>
</dbReference>
<dbReference type="Proteomes" id="UP000002254">
    <property type="component" value="Chromosome 7"/>
</dbReference>
<dbReference type="Proteomes" id="UP000694429">
    <property type="component" value="Chromosome 7"/>
</dbReference>
<dbReference type="Proteomes" id="UP000694542">
    <property type="component" value="Chromosome 7"/>
</dbReference>
<dbReference type="Proteomes" id="UP000805418">
    <property type="component" value="Unplaced"/>
</dbReference>
<dbReference type="Bgee" id="ENSCAFG00000016866">
    <property type="expression patterns" value="Expressed in nose and 37 other cell types or tissues"/>
</dbReference>
<dbReference type="GO" id="GO:0005794">
    <property type="term" value="C:Golgi apparatus"/>
    <property type="evidence" value="ECO:0000318"/>
    <property type="project" value="GO_Central"/>
</dbReference>
<dbReference type="GO" id="GO:0031260">
    <property type="term" value="C:pseudopodium membrane"/>
    <property type="evidence" value="ECO:0007669"/>
    <property type="project" value="UniProtKB-SubCell"/>
</dbReference>
<dbReference type="GO" id="GO:0055037">
    <property type="term" value="C:recycling endosome"/>
    <property type="evidence" value="ECO:0000318"/>
    <property type="project" value="GO_Central"/>
</dbReference>
<dbReference type="GO" id="GO:0003925">
    <property type="term" value="F:G protein activity"/>
    <property type="evidence" value="ECO:0000250"/>
    <property type="project" value="UniProtKB"/>
</dbReference>
<dbReference type="GO" id="GO:0005525">
    <property type="term" value="F:GTP binding"/>
    <property type="evidence" value="ECO:0000318"/>
    <property type="project" value="GO_Central"/>
</dbReference>
<dbReference type="GO" id="GO:0003924">
    <property type="term" value="F:GTPase activity"/>
    <property type="evidence" value="ECO:0000318"/>
    <property type="project" value="GO_Central"/>
</dbReference>
<dbReference type="GO" id="GO:0003382">
    <property type="term" value="P:epithelial cell morphogenesis"/>
    <property type="evidence" value="ECO:0000250"/>
    <property type="project" value="UniProtKB"/>
</dbReference>
<dbReference type="GO" id="GO:0006887">
    <property type="term" value="P:exocytosis"/>
    <property type="evidence" value="ECO:0000318"/>
    <property type="project" value="GO_Central"/>
</dbReference>
<dbReference type="GO" id="GO:0015031">
    <property type="term" value="P:protein transport"/>
    <property type="evidence" value="ECO:0007669"/>
    <property type="project" value="UniProtKB-KW"/>
</dbReference>
<dbReference type="CDD" id="cd01868">
    <property type="entry name" value="Rab11_like"/>
    <property type="match status" value="1"/>
</dbReference>
<dbReference type="FunFam" id="3.40.50.300:FF:000067">
    <property type="entry name" value="ras-related protein RABA1f"/>
    <property type="match status" value="1"/>
</dbReference>
<dbReference type="Gene3D" id="3.40.50.300">
    <property type="entry name" value="P-loop containing nucleotide triphosphate hydrolases"/>
    <property type="match status" value="1"/>
</dbReference>
<dbReference type="InterPro" id="IPR027417">
    <property type="entry name" value="P-loop_NTPase"/>
</dbReference>
<dbReference type="InterPro" id="IPR050209">
    <property type="entry name" value="Rab_GTPases_membrane_traffic"/>
</dbReference>
<dbReference type="InterPro" id="IPR005225">
    <property type="entry name" value="Small_GTP-bd"/>
</dbReference>
<dbReference type="InterPro" id="IPR001806">
    <property type="entry name" value="Small_GTPase"/>
</dbReference>
<dbReference type="NCBIfam" id="TIGR00231">
    <property type="entry name" value="small_GTP"/>
    <property type="match status" value="1"/>
</dbReference>
<dbReference type="PANTHER" id="PTHR47979">
    <property type="entry name" value="DRAB11-RELATED"/>
    <property type="match status" value="1"/>
</dbReference>
<dbReference type="Pfam" id="PF00071">
    <property type="entry name" value="Ras"/>
    <property type="match status" value="1"/>
</dbReference>
<dbReference type="PRINTS" id="PR00449">
    <property type="entry name" value="RASTRNSFRMNG"/>
</dbReference>
<dbReference type="SMART" id="SM00175">
    <property type="entry name" value="RAB"/>
    <property type="match status" value="1"/>
</dbReference>
<dbReference type="SMART" id="SM00176">
    <property type="entry name" value="RAN"/>
    <property type="match status" value="1"/>
</dbReference>
<dbReference type="SMART" id="SM00173">
    <property type="entry name" value="RAS"/>
    <property type="match status" value="1"/>
</dbReference>
<dbReference type="SMART" id="SM00174">
    <property type="entry name" value="RHO"/>
    <property type="match status" value="1"/>
</dbReference>
<dbReference type="SUPFAM" id="SSF52540">
    <property type="entry name" value="P-loop containing nucleoside triphosphate hydrolases"/>
    <property type="match status" value="1"/>
</dbReference>
<dbReference type="PROSITE" id="PS51419">
    <property type="entry name" value="RAB"/>
    <property type="match status" value="1"/>
</dbReference>
<protein>
    <recommendedName>
        <fullName>Ras-related protein Rab-25</fullName>
        <ecNumber evidence="2">3.6.5.2</ecNumber>
    </recommendedName>
</protein>
<accession>E2RQ15</accession>
<reference key="1">
    <citation type="journal article" date="2005" name="Nature">
        <title>Genome sequence, comparative analysis and haplotype structure of the domestic dog.</title>
        <authorList>
            <person name="Lindblad-Toh K."/>
            <person name="Wade C.M."/>
            <person name="Mikkelsen T.S."/>
            <person name="Karlsson E.K."/>
            <person name="Jaffe D.B."/>
            <person name="Kamal M."/>
            <person name="Clamp M."/>
            <person name="Chang J.L."/>
            <person name="Kulbokas E.J. III"/>
            <person name="Zody M.C."/>
            <person name="Mauceli E."/>
            <person name="Xie X."/>
            <person name="Breen M."/>
            <person name="Wayne R.K."/>
            <person name="Ostrander E.A."/>
            <person name="Ponting C.P."/>
            <person name="Galibert F."/>
            <person name="Smith D.R."/>
            <person name="deJong P.J."/>
            <person name="Kirkness E.F."/>
            <person name="Alvarez P."/>
            <person name="Biagi T."/>
            <person name="Brockman W."/>
            <person name="Butler J."/>
            <person name="Chin C.-W."/>
            <person name="Cook A."/>
            <person name="Cuff J."/>
            <person name="Daly M.J."/>
            <person name="DeCaprio D."/>
            <person name="Gnerre S."/>
            <person name="Grabherr M."/>
            <person name="Kellis M."/>
            <person name="Kleber M."/>
            <person name="Bardeleben C."/>
            <person name="Goodstadt L."/>
            <person name="Heger A."/>
            <person name="Hitte C."/>
            <person name="Kim L."/>
            <person name="Koepfli K.-P."/>
            <person name="Parker H.G."/>
            <person name="Pollinger J.P."/>
            <person name="Searle S.M.J."/>
            <person name="Sutter N.B."/>
            <person name="Thomas R."/>
            <person name="Webber C."/>
            <person name="Baldwin J."/>
            <person name="Abebe A."/>
            <person name="Abouelleil A."/>
            <person name="Aftuck L."/>
            <person name="Ait-Zahra M."/>
            <person name="Aldredge T."/>
            <person name="Allen N."/>
            <person name="An P."/>
            <person name="Anderson S."/>
            <person name="Antoine C."/>
            <person name="Arachchi H."/>
            <person name="Aslam A."/>
            <person name="Ayotte L."/>
            <person name="Bachantsang P."/>
            <person name="Barry A."/>
            <person name="Bayul T."/>
            <person name="Benamara M."/>
            <person name="Berlin A."/>
            <person name="Bessette D."/>
            <person name="Blitshteyn B."/>
            <person name="Bloom T."/>
            <person name="Blye J."/>
            <person name="Boguslavskiy L."/>
            <person name="Bonnet C."/>
            <person name="Boukhgalter B."/>
            <person name="Brown A."/>
            <person name="Cahill P."/>
            <person name="Calixte N."/>
            <person name="Camarata J."/>
            <person name="Cheshatsang Y."/>
            <person name="Chu J."/>
            <person name="Citroen M."/>
            <person name="Collymore A."/>
            <person name="Cooke P."/>
            <person name="Dawoe T."/>
            <person name="Daza R."/>
            <person name="Decktor K."/>
            <person name="DeGray S."/>
            <person name="Dhargay N."/>
            <person name="Dooley K."/>
            <person name="Dooley K."/>
            <person name="Dorje P."/>
            <person name="Dorjee K."/>
            <person name="Dorris L."/>
            <person name="Duffey N."/>
            <person name="Dupes A."/>
            <person name="Egbiremolen O."/>
            <person name="Elong R."/>
            <person name="Falk J."/>
            <person name="Farina A."/>
            <person name="Faro S."/>
            <person name="Ferguson D."/>
            <person name="Ferreira P."/>
            <person name="Fisher S."/>
            <person name="FitzGerald M."/>
            <person name="Foley K."/>
            <person name="Foley C."/>
            <person name="Franke A."/>
            <person name="Friedrich D."/>
            <person name="Gage D."/>
            <person name="Garber M."/>
            <person name="Gearin G."/>
            <person name="Giannoukos G."/>
            <person name="Goode T."/>
            <person name="Goyette A."/>
            <person name="Graham J."/>
            <person name="Grandbois E."/>
            <person name="Gyaltsen K."/>
            <person name="Hafez N."/>
            <person name="Hagopian D."/>
            <person name="Hagos B."/>
            <person name="Hall J."/>
            <person name="Healy C."/>
            <person name="Hegarty R."/>
            <person name="Honan T."/>
            <person name="Horn A."/>
            <person name="Houde N."/>
            <person name="Hughes L."/>
            <person name="Hunnicutt L."/>
            <person name="Husby M."/>
            <person name="Jester B."/>
            <person name="Jones C."/>
            <person name="Kamat A."/>
            <person name="Kanga B."/>
            <person name="Kells C."/>
            <person name="Khazanovich D."/>
            <person name="Kieu A.C."/>
            <person name="Kisner P."/>
            <person name="Kumar M."/>
            <person name="Lance K."/>
            <person name="Landers T."/>
            <person name="Lara M."/>
            <person name="Lee W."/>
            <person name="Leger J.-P."/>
            <person name="Lennon N."/>
            <person name="Leuper L."/>
            <person name="LeVine S."/>
            <person name="Liu J."/>
            <person name="Liu X."/>
            <person name="Lokyitsang Y."/>
            <person name="Lokyitsang T."/>
            <person name="Lui A."/>
            <person name="Macdonald J."/>
            <person name="Major J."/>
            <person name="Marabella R."/>
            <person name="Maru K."/>
            <person name="Matthews C."/>
            <person name="McDonough S."/>
            <person name="Mehta T."/>
            <person name="Meldrim J."/>
            <person name="Melnikov A."/>
            <person name="Meneus L."/>
            <person name="Mihalev A."/>
            <person name="Mihova T."/>
            <person name="Miller K."/>
            <person name="Mittelman R."/>
            <person name="Mlenga V."/>
            <person name="Mulrain L."/>
            <person name="Munson G."/>
            <person name="Navidi A."/>
            <person name="Naylor J."/>
            <person name="Nguyen T."/>
            <person name="Nguyen N."/>
            <person name="Nguyen C."/>
            <person name="Nguyen T."/>
            <person name="Nicol R."/>
            <person name="Norbu N."/>
            <person name="Norbu C."/>
            <person name="Novod N."/>
            <person name="Nyima T."/>
            <person name="Olandt P."/>
            <person name="O'Neill B."/>
            <person name="O'Neill K."/>
            <person name="Osman S."/>
            <person name="Oyono L."/>
            <person name="Patti C."/>
            <person name="Perrin D."/>
            <person name="Phunkhang P."/>
            <person name="Pierre F."/>
            <person name="Priest M."/>
            <person name="Rachupka A."/>
            <person name="Raghuraman S."/>
            <person name="Rameau R."/>
            <person name="Ray V."/>
            <person name="Raymond C."/>
            <person name="Rege F."/>
            <person name="Rise C."/>
            <person name="Rogers J."/>
            <person name="Rogov P."/>
            <person name="Sahalie J."/>
            <person name="Settipalli S."/>
            <person name="Sharpe T."/>
            <person name="Shea T."/>
            <person name="Sheehan M."/>
            <person name="Sherpa N."/>
            <person name="Shi J."/>
            <person name="Shih D."/>
            <person name="Sloan J."/>
            <person name="Smith C."/>
            <person name="Sparrow T."/>
            <person name="Stalker J."/>
            <person name="Stange-Thomann N."/>
            <person name="Stavropoulos S."/>
            <person name="Stone C."/>
            <person name="Stone S."/>
            <person name="Sykes S."/>
            <person name="Tchuinga P."/>
            <person name="Tenzing P."/>
            <person name="Tesfaye S."/>
            <person name="Thoulutsang D."/>
            <person name="Thoulutsang Y."/>
            <person name="Topham K."/>
            <person name="Topping I."/>
            <person name="Tsamla T."/>
            <person name="Vassiliev H."/>
            <person name="Venkataraman V."/>
            <person name="Vo A."/>
            <person name="Wangchuk T."/>
            <person name="Wangdi T."/>
            <person name="Weiand M."/>
            <person name="Wilkinson J."/>
            <person name="Wilson A."/>
            <person name="Yadav S."/>
            <person name="Yang S."/>
            <person name="Yang X."/>
            <person name="Young G."/>
            <person name="Yu Q."/>
            <person name="Zainoun J."/>
            <person name="Zembek L."/>
            <person name="Zimmer A."/>
            <person name="Lander E.S."/>
        </authorList>
    </citation>
    <scope>NUCLEOTIDE SEQUENCE [LARGE SCALE GENOMIC DNA]</scope>
    <source>
        <strain>Boxer</strain>
    </source>
</reference>
<reference key="2">
    <citation type="journal article" date="2009" name="J. Cell Biol.">
        <title>The recycling and transcytotic pathways for IgG transport by FcRn are distinct and display an inherent polarity.</title>
        <authorList>
            <person name="Tzaban S."/>
            <person name="Massol R.H."/>
            <person name="Yen E."/>
            <person name="Hamman W."/>
            <person name="Frank S.R."/>
            <person name="Lapierre L.A."/>
            <person name="Hansen S.H."/>
            <person name="Goldenring J.R."/>
            <person name="Blumberg R.S."/>
            <person name="Lencer W.I."/>
        </authorList>
    </citation>
    <scope>FUNCTION</scope>
</reference>
<feature type="chain" id="PRO_0000409023" description="Ras-related protein Rab-25">
    <location>
        <begin position="1"/>
        <end position="210"/>
    </location>
</feature>
<feature type="propeptide" id="PRO_0000409024" description="Removed in mature form" evidence="7">
    <location>
        <begin position="211"/>
        <end position="213"/>
    </location>
</feature>
<feature type="short sequence motif" description="Switch 1" evidence="5">
    <location>
        <begin position="35"/>
        <end position="49"/>
    </location>
</feature>
<feature type="short sequence motif" description="Switch 2" evidence="5">
    <location>
        <begin position="67"/>
        <end position="84"/>
    </location>
</feature>
<feature type="binding site" evidence="3">
    <location>
        <position position="21"/>
    </location>
    <ligand>
        <name>GTP</name>
        <dbReference type="ChEBI" id="CHEBI:37565"/>
    </ligand>
</feature>
<feature type="binding site" evidence="3">
    <location>
        <position position="24"/>
    </location>
    <ligand>
        <name>GTP</name>
        <dbReference type="ChEBI" id="CHEBI:37565"/>
    </ligand>
</feature>
<feature type="binding site" evidence="3">
    <location>
        <position position="25"/>
    </location>
    <ligand>
        <name>GTP</name>
        <dbReference type="ChEBI" id="CHEBI:37565"/>
    </ligand>
</feature>
<feature type="binding site" evidence="3">
    <location>
        <position position="26"/>
    </location>
    <ligand>
        <name>GTP</name>
        <dbReference type="ChEBI" id="CHEBI:37565"/>
    </ligand>
</feature>
<feature type="binding site" evidence="3">
    <location>
        <position position="26"/>
    </location>
    <ligand>
        <name>Mg(2+)</name>
        <dbReference type="ChEBI" id="CHEBI:18420"/>
    </ligand>
</feature>
<feature type="binding site" evidence="3">
    <location>
        <position position="27"/>
    </location>
    <ligand>
        <name>GTP</name>
        <dbReference type="ChEBI" id="CHEBI:37565"/>
    </ligand>
</feature>
<feature type="binding site" evidence="3">
    <location>
        <position position="38"/>
    </location>
    <ligand>
        <name>GTP</name>
        <dbReference type="ChEBI" id="CHEBI:37565"/>
    </ligand>
</feature>
<feature type="binding site" evidence="3">
    <location>
        <position position="39"/>
    </location>
    <ligand>
        <name>GTP</name>
        <dbReference type="ChEBI" id="CHEBI:37565"/>
    </ligand>
</feature>
<feature type="binding site" evidence="3">
    <location>
        <position position="43"/>
    </location>
    <ligand>
        <name>GTP</name>
        <dbReference type="ChEBI" id="CHEBI:37565"/>
    </ligand>
</feature>
<feature type="binding site" evidence="3">
    <location>
        <position position="44"/>
    </location>
    <ligand>
        <name>GTP</name>
        <dbReference type="ChEBI" id="CHEBI:37565"/>
    </ligand>
</feature>
<feature type="binding site" evidence="3">
    <location>
        <position position="44"/>
    </location>
    <ligand>
        <name>Mg(2+)</name>
        <dbReference type="ChEBI" id="CHEBI:18420"/>
    </ligand>
</feature>
<feature type="binding site" evidence="3">
    <location>
        <position position="67"/>
    </location>
    <ligand>
        <name>Mg(2+)</name>
        <dbReference type="ChEBI" id="CHEBI:18420"/>
    </ligand>
</feature>
<feature type="binding site" evidence="3">
    <location>
        <position position="70"/>
    </location>
    <ligand>
        <name>GTP</name>
        <dbReference type="ChEBI" id="CHEBI:37565"/>
    </ligand>
</feature>
<feature type="binding site" evidence="3">
    <location>
        <position position="125"/>
    </location>
    <ligand>
        <name>GTP</name>
        <dbReference type="ChEBI" id="CHEBI:37565"/>
    </ligand>
</feature>
<feature type="binding site" evidence="3">
    <location>
        <position position="126"/>
    </location>
    <ligand>
        <name>GTP</name>
        <dbReference type="ChEBI" id="CHEBI:37565"/>
    </ligand>
</feature>
<feature type="binding site" evidence="3">
    <location>
        <position position="128"/>
    </location>
    <ligand>
        <name>GTP</name>
        <dbReference type="ChEBI" id="CHEBI:37565"/>
    </ligand>
</feature>
<feature type="binding site" evidence="3">
    <location>
        <position position="156"/>
    </location>
    <ligand>
        <name>GTP</name>
        <dbReference type="ChEBI" id="CHEBI:37565"/>
    </ligand>
</feature>
<feature type="binding site" evidence="3">
    <location>
        <position position="157"/>
    </location>
    <ligand>
        <name>GTP</name>
        <dbReference type="ChEBI" id="CHEBI:37565"/>
    </ligand>
</feature>
<feature type="modified residue" description="Cysteine methyl ester" evidence="7">
    <location>
        <position position="210"/>
    </location>
</feature>
<feature type="lipid moiety-binding region" description="S-geranylgeranyl cysteine" evidence="1">
    <location>
        <position position="209"/>
    </location>
</feature>
<feature type="lipid moiety-binding region" description="S-geranylgeranyl cysteine" evidence="1">
    <location>
        <position position="210"/>
    </location>
</feature>